<gene>
    <name evidence="1" type="primary">argC</name>
    <name type="ordered locus">MM_0476</name>
</gene>
<comment type="function">
    <text evidence="1">Catalyzes the NADPH-dependent reduction of N-acetyl-5-glutamyl phosphate to yield N-acetyl-L-glutamate 5-semialdehyde.</text>
</comment>
<comment type="catalytic activity">
    <reaction evidence="1">
        <text>N-acetyl-L-glutamate 5-semialdehyde + phosphate + NADP(+) = N-acetyl-L-glutamyl 5-phosphate + NADPH + H(+)</text>
        <dbReference type="Rhea" id="RHEA:21588"/>
        <dbReference type="ChEBI" id="CHEBI:15378"/>
        <dbReference type="ChEBI" id="CHEBI:29123"/>
        <dbReference type="ChEBI" id="CHEBI:43474"/>
        <dbReference type="ChEBI" id="CHEBI:57783"/>
        <dbReference type="ChEBI" id="CHEBI:57936"/>
        <dbReference type="ChEBI" id="CHEBI:58349"/>
        <dbReference type="EC" id="1.2.1.38"/>
    </reaction>
</comment>
<comment type="pathway">
    <text evidence="1">Amino-acid biosynthesis; L-arginine biosynthesis; N(2)-acetyl-L-ornithine from L-glutamate: step 3/4.</text>
</comment>
<comment type="subcellular location">
    <subcellularLocation>
        <location evidence="1">Cytoplasm</location>
    </subcellularLocation>
</comment>
<comment type="similarity">
    <text evidence="1">Belongs to the NAGSA dehydrogenase family. Type 1 subfamily.</text>
</comment>
<dbReference type="EC" id="1.2.1.38" evidence="1"/>
<dbReference type="EMBL" id="AE008384">
    <property type="protein sequence ID" value="AAM30172.1"/>
    <property type="molecule type" value="Genomic_DNA"/>
</dbReference>
<dbReference type="SMR" id="Q8PZL6"/>
<dbReference type="KEGG" id="mma:MM_0476"/>
<dbReference type="PATRIC" id="fig|192952.21.peg.573"/>
<dbReference type="eggNOG" id="arCOG00495">
    <property type="taxonomic scope" value="Archaea"/>
</dbReference>
<dbReference type="HOGENOM" id="CLU_006384_0_1_2"/>
<dbReference type="UniPathway" id="UPA00068">
    <property type="reaction ID" value="UER00108"/>
</dbReference>
<dbReference type="Proteomes" id="UP000000595">
    <property type="component" value="Chromosome"/>
</dbReference>
<dbReference type="GO" id="GO:0005737">
    <property type="term" value="C:cytoplasm"/>
    <property type="evidence" value="ECO:0007669"/>
    <property type="project" value="UniProtKB-SubCell"/>
</dbReference>
<dbReference type="GO" id="GO:0003942">
    <property type="term" value="F:N-acetyl-gamma-glutamyl-phosphate reductase activity"/>
    <property type="evidence" value="ECO:0007669"/>
    <property type="project" value="UniProtKB-UniRule"/>
</dbReference>
<dbReference type="GO" id="GO:0051287">
    <property type="term" value="F:NAD binding"/>
    <property type="evidence" value="ECO:0007669"/>
    <property type="project" value="InterPro"/>
</dbReference>
<dbReference type="GO" id="GO:0070401">
    <property type="term" value="F:NADP+ binding"/>
    <property type="evidence" value="ECO:0007669"/>
    <property type="project" value="InterPro"/>
</dbReference>
<dbReference type="GO" id="GO:0006526">
    <property type="term" value="P:L-arginine biosynthetic process"/>
    <property type="evidence" value="ECO:0007669"/>
    <property type="project" value="UniProtKB-UniRule"/>
</dbReference>
<dbReference type="CDD" id="cd23934">
    <property type="entry name" value="AGPR_1_C"/>
    <property type="match status" value="1"/>
</dbReference>
<dbReference type="CDD" id="cd17895">
    <property type="entry name" value="AGPR_1_N"/>
    <property type="match status" value="1"/>
</dbReference>
<dbReference type="FunFam" id="3.30.360.10:FF:000014">
    <property type="entry name" value="N-acetyl-gamma-glutamyl-phosphate reductase"/>
    <property type="match status" value="1"/>
</dbReference>
<dbReference type="Gene3D" id="3.30.360.10">
    <property type="entry name" value="Dihydrodipicolinate Reductase, domain 2"/>
    <property type="match status" value="1"/>
</dbReference>
<dbReference type="Gene3D" id="3.40.50.720">
    <property type="entry name" value="NAD(P)-binding Rossmann-like Domain"/>
    <property type="match status" value="1"/>
</dbReference>
<dbReference type="HAMAP" id="MF_00150">
    <property type="entry name" value="ArgC_type1"/>
    <property type="match status" value="1"/>
</dbReference>
<dbReference type="InterPro" id="IPR023013">
    <property type="entry name" value="AGPR_AS"/>
</dbReference>
<dbReference type="InterPro" id="IPR000706">
    <property type="entry name" value="AGPR_type-1"/>
</dbReference>
<dbReference type="InterPro" id="IPR036291">
    <property type="entry name" value="NAD(P)-bd_dom_sf"/>
</dbReference>
<dbReference type="InterPro" id="IPR050085">
    <property type="entry name" value="NAGSA_dehydrogenase"/>
</dbReference>
<dbReference type="InterPro" id="IPR000534">
    <property type="entry name" value="Semialdehyde_DH_NAD-bd"/>
</dbReference>
<dbReference type="NCBIfam" id="TIGR01850">
    <property type="entry name" value="argC"/>
    <property type="match status" value="1"/>
</dbReference>
<dbReference type="PANTHER" id="PTHR32338:SF10">
    <property type="entry name" value="N-ACETYL-GAMMA-GLUTAMYL-PHOSPHATE REDUCTASE, CHLOROPLASTIC-RELATED"/>
    <property type="match status" value="1"/>
</dbReference>
<dbReference type="PANTHER" id="PTHR32338">
    <property type="entry name" value="N-ACETYL-GAMMA-GLUTAMYL-PHOSPHATE REDUCTASE, CHLOROPLASTIC-RELATED-RELATED"/>
    <property type="match status" value="1"/>
</dbReference>
<dbReference type="Pfam" id="PF01118">
    <property type="entry name" value="Semialdhyde_dh"/>
    <property type="match status" value="1"/>
</dbReference>
<dbReference type="Pfam" id="PF22698">
    <property type="entry name" value="Semialdhyde_dhC_1"/>
    <property type="match status" value="1"/>
</dbReference>
<dbReference type="SMART" id="SM00859">
    <property type="entry name" value="Semialdhyde_dh"/>
    <property type="match status" value="1"/>
</dbReference>
<dbReference type="SUPFAM" id="SSF55347">
    <property type="entry name" value="Glyceraldehyde-3-phosphate dehydrogenase-like, C-terminal domain"/>
    <property type="match status" value="1"/>
</dbReference>
<dbReference type="SUPFAM" id="SSF51735">
    <property type="entry name" value="NAD(P)-binding Rossmann-fold domains"/>
    <property type="match status" value="1"/>
</dbReference>
<dbReference type="PROSITE" id="PS01224">
    <property type="entry name" value="ARGC"/>
    <property type="match status" value="1"/>
</dbReference>
<evidence type="ECO:0000255" key="1">
    <source>
        <dbReference type="HAMAP-Rule" id="MF_00150"/>
    </source>
</evidence>
<organism>
    <name type="scientific">Methanosarcina mazei (strain ATCC BAA-159 / DSM 3647 / Goe1 / Go1 / JCM 11833 / OCM 88)</name>
    <name type="common">Methanosarcina frisia</name>
    <dbReference type="NCBI Taxonomy" id="192952"/>
    <lineage>
        <taxon>Archaea</taxon>
        <taxon>Methanobacteriati</taxon>
        <taxon>Methanobacteriota</taxon>
        <taxon>Stenosarchaea group</taxon>
        <taxon>Methanomicrobia</taxon>
        <taxon>Methanosarcinales</taxon>
        <taxon>Methanosarcinaceae</taxon>
        <taxon>Methanosarcina</taxon>
    </lineage>
</organism>
<accession>Q8PZL6</accession>
<sequence>MNTMIKAGIIGASGYTGGELLRLLVSHPDVSLELATSRSLAGKPVASTHRHLEGFLDLKYENPGLEEIRERCDLVFLAVPHGTGMNYVPELLDGSTKVIDLSADYRLDIPVFEKIYGIKHSDPRNAVYGLVELHPEAAREYFVANPGCFPTGAILSAAPLAAAGLIDIAVFDSKTGISGAGISPTETSHYPNLAENIVPYKLTAHRHRAEIVQELTRLDGNLRNISFTPHVIPTIRGISTTAHLFTKEPLSTEDVRGIYEEFYRDKPFVRLPGGVPSLTAVRGSNFCDIGFEADKENNRVVVLSAIDNLVKGASGQAIQNMNLMFGLVETRGLWTPATAP</sequence>
<reference key="1">
    <citation type="journal article" date="2002" name="J. Mol. Microbiol. Biotechnol.">
        <title>The genome of Methanosarcina mazei: evidence for lateral gene transfer between Bacteria and Archaea.</title>
        <authorList>
            <person name="Deppenmeier U."/>
            <person name="Johann A."/>
            <person name="Hartsch T."/>
            <person name="Merkl R."/>
            <person name="Schmitz R.A."/>
            <person name="Martinez-Arias R."/>
            <person name="Henne A."/>
            <person name="Wiezer A."/>
            <person name="Baeumer S."/>
            <person name="Jacobi C."/>
            <person name="Brueggemann H."/>
            <person name="Lienard T."/>
            <person name="Christmann A."/>
            <person name="Boemecke M."/>
            <person name="Steckel S."/>
            <person name="Bhattacharyya A."/>
            <person name="Lykidis A."/>
            <person name="Overbeek R."/>
            <person name="Klenk H.-P."/>
            <person name="Gunsalus R.P."/>
            <person name="Fritz H.-J."/>
            <person name="Gottschalk G."/>
        </authorList>
    </citation>
    <scope>NUCLEOTIDE SEQUENCE [LARGE SCALE GENOMIC DNA]</scope>
    <source>
        <strain>ATCC BAA-159 / DSM 3647 / Goe1 / Go1 / JCM 11833 / OCM 88</strain>
    </source>
</reference>
<protein>
    <recommendedName>
        <fullName evidence="1">N-acetyl-gamma-glutamyl-phosphate reductase</fullName>
        <shortName evidence="1">AGPR</shortName>
        <ecNumber evidence="1">1.2.1.38</ecNumber>
    </recommendedName>
    <alternativeName>
        <fullName evidence="1">N-acetyl-glutamate semialdehyde dehydrogenase</fullName>
        <shortName evidence="1">NAGSA dehydrogenase</shortName>
    </alternativeName>
</protein>
<proteinExistence type="inferred from homology"/>
<feature type="chain" id="PRO_0000112488" description="N-acetyl-gamma-glutamyl-phosphate reductase">
    <location>
        <begin position="1"/>
        <end position="340"/>
    </location>
</feature>
<feature type="active site" evidence="1">
    <location>
        <position position="148"/>
    </location>
</feature>
<name>ARGC_METMA</name>
<keyword id="KW-0028">Amino-acid biosynthesis</keyword>
<keyword id="KW-0055">Arginine biosynthesis</keyword>
<keyword id="KW-0963">Cytoplasm</keyword>
<keyword id="KW-0521">NADP</keyword>
<keyword id="KW-0560">Oxidoreductase</keyword>